<evidence type="ECO:0000256" key="1">
    <source>
        <dbReference type="SAM" id="MobiDB-lite"/>
    </source>
</evidence>
<evidence type="ECO:0000269" key="2">
    <source>
    </source>
</evidence>
<evidence type="ECO:0000269" key="3">
    <source>
    </source>
</evidence>
<evidence type="ECO:0000269" key="4">
    <source>
    </source>
</evidence>
<evidence type="ECO:0000269" key="5">
    <source>
    </source>
</evidence>
<evidence type="ECO:0000305" key="6"/>
<organism>
    <name type="scientific">Saccharomyces cerevisiae (strain ATCC 204508 / S288c)</name>
    <name type="common">Baker's yeast</name>
    <dbReference type="NCBI Taxonomy" id="559292"/>
    <lineage>
        <taxon>Eukaryota</taxon>
        <taxon>Fungi</taxon>
        <taxon>Dikarya</taxon>
        <taxon>Ascomycota</taxon>
        <taxon>Saccharomycotina</taxon>
        <taxon>Saccharomycetes</taxon>
        <taxon>Saccharomycetales</taxon>
        <taxon>Saccharomycetaceae</taxon>
        <taxon>Saccharomyces</taxon>
    </lineage>
</organism>
<feature type="chain" id="PRO_0000233011" description="Protein SPH1">
    <location>
        <begin position="1"/>
        <end position="661"/>
    </location>
</feature>
<feature type="region of interest" description="Disordered" evidence="1">
    <location>
        <begin position="313"/>
        <end position="340"/>
    </location>
</feature>
<feature type="region of interest" description="Disordered" evidence="1">
    <location>
        <begin position="356"/>
        <end position="418"/>
    </location>
</feature>
<feature type="compositionally biased region" description="Polar residues" evidence="1">
    <location>
        <begin position="318"/>
        <end position="330"/>
    </location>
</feature>
<feature type="compositionally biased region" description="Basic and acidic residues" evidence="1">
    <location>
        <begin position="356"/>
        <end position="365"/>
    </location>
</feature>
<feature type="compositionally biased region" description="Polar residues" evidence="1">
    <location>
        <begin position="366"/>
        <end position="395"/>
    </location>
</feature>
<feature type="compositionally biased region" description="Polar residues" evidence="1">
    <location>
        <begin position="406"/>
        <end position="418"/>
    </location>
</feature>
<feature type="sequence conflict" description="In Ref. 1; AAB63284." evidence="6" ref="1">
    <original>T</original>
    <variation>S</variation>
    <location>
        <position position="141"/>
    </location>
</feature>
<feature type="sequence conflict" description="In Ref. 1; AAB63284." evidence="6" ref="1">
    <original>D</original>
    <variation>H</variation>
    <location>
        <position position="281"/>
    </location>
</feature>
<feature type="sequence conflict" description="In Ref. 1; AAB63284." evidence="6" ref="1">
    <original>S</original>
    <variation>L</variation>
    <location>
        <position position="316"/>
    </location>
</feature>
<feature type="sequence conflict" description="In Ref. 1; AAB63284." evidence="6" ref="1">
    <original>AS</original>
    <variation>TF</variation>
    <location>
        <begin position="377"/>
        <end position="378"/>
    </location>
</feature>
<feature type="sequence conflict" description="In Ref. 1; AAB63284." evidence="6" ref="1">
    <original>G</original>
    <variation>S</variation>
    <location>
        <position position="400"/>
    </location>
</feature>
<feature type="sequence conflict" description="In Ref. 1; AAB63284." evidence="6" ref="1">
    <original>A</original>
    <variation>T</variation>
    <location>
        <position position="431"/>
    </location>
</feature>
<feature type="sequence conflict" description="In Ref. 1; AAB63284." evidence="6" ref="1">
    <original>F</original>
    <variation>Y</variation>
    <location>
        <position position="541"/>
    </location>
</feature>
<feature type="sequence conflict" description="In Ref. 1; AAB63284." evidence="6" ref="1">
    <original>S</original>
    <variation>C</variation>
    <location>
        <position position="576"/>
    </location>
</feature>
<feature type="sequence conflict" description="In Ref. 1; AAB63284." evidence="6" ref="1">
    <original>D</original>
    <variation>N</variation>
    <location>
        <position position="580"/>
    </location>
</feature>
<feature type="sequence conflict" description="In Ref. 1; AAB63284." evidence="6" ref="1">
    <original>L</original>
    <variation>F</variation>
    <location>
        <position position="651"/>
    </location>
</feature>
<dbReference type="EMBL" id="AF008236">
    <property type="protein sequence ID" value="AAB63284.1"/>
    <property type="status" value="ALT_SEQ"/>
    <property type="molecule type" value="Genomic_DNA"/>
</dbReference>
<dbReference type="EMBL" id="U20618">
    <property type="protein sequence ID" value="AAB64516.2"/>
    <property type="molecule type" value="Genomic_DNA"/>
</dbReference>
<dbReference type="EMBL" id="AY899256">
    <property type="protein sequence ID" value="AAX83941.1"/>
    <property type="molecule type" value="mRNA"/>
</dbReference>
<dbReference type="EMBL" id="BK006945">
    <property type="protein sequence ID" value="DAA09623.2"/>
    <property type="status" value="ALT_FRAME"/>
    <property type="molecule type" value="Genomic_DNA"/>
</dbReference>
<dbReference type="PIR" id="S53392">
    <property type="entry name" value="S53392"/>
</dbReference>
<dbReference type="RefSeq" id="NP_013417.3">
    <property type="nucleotide sequence ID" value="NM_001182202.2"/>
</dbReference>
<dbReference type="SMR" id="Q06160"/>
<dbReference type="BioGRID" id="31578">
    <property type="interactions" value="91"/>
</dbReference>
<dbReference type="DIP" id="DIP-2337N"/>
<dbReference type="FunCoup" id="Q06160">
    <property type="interactions" value="43"/>
</dbReference>
<dbReference type="IntAct" id="Q06160">
    <property type="interactions" value="4"/>
</dbReference>
<dbReference type="MINT" id="Q06160"/>
<dbReference type="STRING" id="4932.YLR313C"/>
<dbReference type="iPTMnet" id="Q06160"/>
<dbReference type="PaxDb" id="4932-YLR313C"/>
<dbReference type="PeptideAtlas" id="Q06160"/>
<dbReference type="GeneID" id="851023"/>
<dbReference type="KEGG" id="sce:YLR313C"/>
<dbReference type="AGR" id="SGD:S000004305"/>
<dbReference type="SGD" id="S000004305">
    <property type="gene designation" value="SPH1"/>
</dbReference>
<dbReference type="HOGENOM" id="CLU_422856_0_0_1"/>
<dbReference type="InParanoid" id="Q06160"/>
<dbReference type="OrthoDB" id="5588096at2759"/>
<dbReference type="BioCyc" id="YEAST:G3O-32399-MONOMER"/>
<dbReference type="BioGRID-ORCS" id="851023">
    <property type="hits" value="0 hits in 10 CRISPR screens"/>
</dbReference>
<dbReference type="PRO" id="PR:Q06160"/>
<dbReference type="Proteomes" id="UP000002311">
    <property type="component" value="Chromosome XII"/>
</dbReference>
<dbReference type="RNAct" id="Q06160">
    <property type="molecule type" value="protein"/>
</dbReference>
<dbReference type="GO" id="GO:0005826">
    <property type="term" value="C:actomyosin contractile ring"/>
    <property type="evidence" value="ECO:0000318"/>
    <property type="project" value="GO_Central"/>
</dbReference>
<dbReference type="GO" id="GO:1902716">
    <property type="term" value="C:cell cortex of growing cell tip"/>
    <property type="evidence" value="ECO:0000318"/>
    <property type="project" value="GO_Central"/>
</dbReference>
<dbReference type="GO" id="GO:0005935">
    <property type="term" value="C:cellular bud neck"/>
    <property type="evidence" value="ECO:0000314"/>
    <property type="project" value="SGD"/>
</dbReference>
<dbReference type="GO" id="GO:0005934">
    <property type="term" value="C:cellular bud tip"/>
    <property type="evidence" value="ECO:0000314"/>
    <property type="project" value="SGD"/>
</dbReference>
<dbReference type="GO" id="GO:0000131">
    <property type="term" value="C:incipient cellular bud site"/>
    <property type="evidence" value="ECO:0000314"/>
    <property type="project" value="SGD"/>
</dbReference>
<dbReference type="GO" id="GO:0005937">
    <property type="term" value="C:mating projection"/>
    <property type="evidence" value="ECO:0000314"/>
    <property type="project" value="SGD"/>
</dbReference>
<dbReference type="GO" id="GO:0043332">
    <property type="term" value="C:mating projection tip"/>
    <property type="evidence" value="ECO:0000318"/>
    <property type="project" value="GO_Central"/>
</dbReference>
<dbReference type="GO" id="GO:0003779">
    <property type="term" value="F:actin binding"/>
    <property type="evidence" value="ECO:0007669"/>
    <property type="project" value="UniProtKB-KW"/>
</dbReference>
<dbReference type="GO" id="GO:0005078">
    <property type="term" value="F:MAP-kinase scaffold activity"/>
    <property type="evidence" value="ECO:0000318"/>
    <property type="project" value="GO_Central"/>
</dbReference>
<dbReference type="GO" id="GO:0007121">
    <property type="term" value="P:bipolar cellular bud site selection"/>
    <property type="evidence" value="ECO:0000315"/>
    <property type="project" value="SGD"/>
</dbReference>
<dbReference type="GO" id="GO:0036267">
    <property type="term" value="P:invasive filamentous growth"/>
    <property type="evidence" value="ECO:0000316"/>
    <property type="project" value="SGD"/>
</dbReference>
<dbReference type="GO" id="GO:0007124">
    <property type="term" value="P:pseudohyphal growth"/>
    <property type="evidence" value="ECO:0000315"/>
    <property type="project" value="SGD"/>
</dbReference>
<dbReference type="GO" id="GO:0008360">
    <property type="term" value="P:regulation of cell shape"/>
    <property type="evidence" value="ECO:0007669"/>
    <property type="project" value="UniProtKB-KW"/>
</dbReference>
<dbReference type="InterPro" id="IPR013724">
    <property type="entry name" value="GIT_SHD"/>
</dbReference>
<dbReference type="InterPro" id="IPR039892">
    <property type="entry name" value="Spa2/Sph1"/>
</dbReference>
<dbReference type="PANTHER" id="PTHR21601:SF0">
    <property type="entry name" value="PROTEIN SPA2-RELATED"/>
    <property type="match status" value="1"/>
</dbReference>
<dbReference type="PANTHER" id="PTHR21601">
    <property type="entry name" value="SPA2 PROTEIN"/>
    <property type="match status" value="1"/>
</dbReference>
<dbReference type="Pfam" id="PF08518">
    <property type="entry name" value="GIT_SHD"/>
    <property type="match status" value="1"/>
</dbReference>
<dbReference type="SMART" id="SM00555">
    <property type="entry name" value="GIT"/>
    <property type="match status" value="2"/>
</dbReference>
<name>SPH1_YEAST</name>
<accession>Q06160</accession>
<accession>D6VYV7</accession>
<accession>O13526</accession>
<accession>Q2VQW2</accession>
<proteinExistence type="evidence at protein level"/>
<sequence length="661" mass="74007">MISSELTNDQIIDLISDYKNFKRIIEASVPEDDRRRNQNRQNRNKDLTKLSNVQFWQLTTDVNDELMKRLTDSGADASLNDLDLKRGKAQSKLSRLKDAKFHKLILDIFTEIERRNLHHLDMGTHNNGLDEGDLNFYLNDTLFESFKINDDFMSVNGIISIEVFRELKTQFTLYFQNTLHRIDPVDTTTTRLPILLETIIKIAKLIGDLLPVLSSVSLQSSLENEIVYLKSALSHAITSTRYFLTYGDLIPRIVAQSSISEVIFAFCNIAQIVKIKSTSRDDISRNEGELSDIEAGMKPLKIIEKVKNEKNGKDISSLGDSGSTAVSFPSSGKPITKKSDMPVVVASPSISIIEKSESSIRESGKVRNNTSGETNLASVSPLKNTKNSSRITSEPSPREGLPLKVVSNSRSPSPQGNTLPLIGKFRQDYQASPPKKVITKPVAETAKPYANIPPAADVLYSPTVTKMRKFREKVQKFAPNSGLGLRISTSEENLNNSDVNSTTHNANINNLVEFVESKSMVVLPMAQGILNDVQASKSKLFKSARSVSRLCQNSIEIIPILESVIDMTTKAMVQKSFKLDLGEHCKEIIERLTDCSQKLSELCTYGCDSTKLGKKRFYQKLADILMEVTKRTRELVECVKMANRQTLSQDLSSFFNYRSVQ</sequence>
<comment type="function">
    <text evidence="2 4 5">Polarity-determining protein which forms a conjugate with the ubiquitin-like modifier HUB1. Involved in bud site selection and cellular morphogenesis during conjugation. Required for pseudohyphal growth.</text>
</comment>
<comment type="subunit">
    <text>Conjugated with HUB1. HUB1 has not the classical C-terminal Gly residue, so it is still unknown how conjugation may occur.</text>
</comment>
<comment type="subcellular location">
    <subcellularLocation>
        <location>Bud tip</location>
    </subcellularLocation>
    <subcellularLocation>
        <location>Bud neck</location>
    </subcellularLocation>
    <subcellularLocation>
        <location>Cytoplasm</location>
        <location>Cytoskeleton</location>
    </subcellularLocation>
    <text>Sites of polarized growth as bud tip, bud neck and mating projection. Hub1 is necessary for the proper location to mating projections after pheromone alpha treatment.</text>
</comment>
<comment type="miscellaneous">
    <text evidence="3">Present with 672 molecules/cell in log phase SD medium.</text>
</comment>
<comment type="sequence caution" evidence="6">
    <conflict type="erroneous termination">
        <sequence resource="EMBL-CDS" id="AAB63284"/>
    </conflict>
    <text>Truncated C-terminus.</text>
</comment>
<comment type="sequence caution" evidence="6">
    <conflict type="frameshift">
        <sequence resource="EMBL-CDS" id="DAA09623"/>
    </conflict>
</comment>
<gene>
    <name type="primary">SPH1</name>
    <name type="ordered locus">YLR313C</name>
</gene>
<keyword id="KW-0009">Actin-binding</keyword>
<keyword id="KW-0133">Cell shape</keyword>
<keyword id="KW-0184">Conjugation</keyword>
<keyword id="KW-0963">Cytoplasm</keyword>
<keyword id="KW-0206">Cytoskeleton</keyword>
<keyword id="KW-1185">Reference proteome</keyword>
<protein>
    <recommendedName>
        <fullName>Protein SPH1</fullName>
    </recommendedName>
    <alternativeName>
        <fullName>SPA2 homolog 1</fullName>
    </alternativeName>
</protein>
<reference key="1">
    <citation type="journal article" date="1997" name="J. Cell Biol.">
        <title>A small conserved domain in the yeast Spa2p is necessary and sufficient for its polarized localization.</title>
        <authorList>
            <person name="Arkowitz R.A."/>
            <person name="Lowe N."/>
        </authorList>
    </citation>
    <scope>NUCLEOTIDE SEQUENCE [GENOMIC DNA]</scope>
    <scope>FUNCTION</scope>
    <scope>SUBCELLULAR LOCATION</scope>
    <source>
        <strain>ATCC 96099 / S288c / SEY6210</strain>
    </source>
</reference>
<reference key="2">
    <citation type="journal article" date="1997" name="Nature">
        <title>The nucleotide sequence of Saccharomyces cerevisiae chromosome XII.</title>
        <authorList>
            <person name="Johnston M."/>
            <person name="Hillier L.W."/>
            <person name="Riles L."/>
            <person name="Albermann K."/>
            <person name="Andre B."/>
            <person name="Ansorge W."/>
            <person name="Benes V."/>
            <person name="Brueckner M."/>
            <person name="Delius H."/>
            <person name="Dubois E."/>
            <person name="Duesterhoeft A."/>
            <person name="Entian K.-D."/>
            <person name="Floeth M."/>
            <person name="Goffeau A."/>
            <person name="Hebling U."/>
            <person name="Heumann K."/>
            <person name="Heuss-Neitzel D."/>
            <person name="Hilbert H."/>
            <person name="Hilger F."/>
            <person name="Kleine K."/>
            <person name="Koetter P."/>
            <person name="Louis E.J."/>
            <person name="Messenguy F."/>
            <person name="Mewes H.-W."/>
            <person name="Miosga T."/>
            <person name="Moestl D."/>
            <person name="Mueller-Auer S."/>
            <person name="Nentwich U."/>
            <person name="Obermaier B."/>
            <person name="Piravandi E."/>
            <person name="Pohl T.M."/>
            <person name="Portetelle D."/>
            <person name="Purnelle B."/>
            <person name="Rechmann S."/>
            <person name="Rieger M."/>
            <person name="Rinke M."/>
            <person name="Rose M."/>
            <person name="Scharfe M."/>
            <person name="Scherens B."/>
            <person name="Scholler P."/>
            <person name="Schwager C."/>
            <person name="Schwarz S."/>
            <person name="Underwood A.P."/>
            <person name="Urrestarazu L.A."/>
            <person name="Vandenbol M."/>
            <person name="Verhasselt P."/>
            <person name="Vierendeels F."/>
            <person name="Voet M."/>
            <person name="Volckaert G."/>
            <person name="Voss H."/>
            <person name="Wambutt R."/>
            <person name="Wedler E."/>
            <person name="Wedler H."/>
            <person name="Zimmermann F.K."/>
            <person name="Zollner A."/>
            <person name="Hani J."/>
            <person name="Hoheisel J.D."/>
        </authorList>
    </citation>
    <scope>NUCLEOTIDE SEQUENCE [LARGE SCALE GENOMIC DNA]</scope>
    <source>
        <strain>ATCC 204508 / S288c</strain>
    </source>
</reference>
<reference key="3">
    <citation type="submission" date="2004-02" db="EMBL/GenBank/DDBJ databases">
        <authorList>
            <person name="Hong E.L."/>
            <person name="Cherry J.M."/>
        </authorList>
    </citation>
    <scope>SEQUENCE REVISION TO 527</scope>
</reference>
<reference key="4">
    <citation type="journal article" date="2014" name="G3 (Bethesda)">
        <title>The reference genome sequence of Saccharomyces cerevisiae: Then and now.</title>
        <authorList>
            <person name="Engel S.R."/>
            <person name="Dietrich F.S."/>
            <person name="Fisk D.G."/>
            <person name="Binkley G."/>
            <person name="Balakrishnan R."/>
            <person name="Costanzo M.C."/>
            <person name="Dwight S.S."/>
            <person name="Hitz B.C."/>
            <person name="Karra K."/>
            <person name="Nash R.S."/>
            <person name="Weng S."/>
            <person name="Wong E.D."/>
            <person name="Lloyd P."/>
            <person name="Skrzypek M.S."/>
            <person name="Miyasato S.R."/>
            <person name="Simison M."/>
            <person name="Cherry J.M."/>
        </authorList>
    </citation>
    <scope>GENOME REANNOTATION</scope>
    <scope>SEQUENCE REVISION TO 527</scope>
    <source>
        <strain>ATCC 204508 / S288c</strain>
    </source>
</reference>
<reference key="5">
    <citation type="journal article" date="2005" name="Curr. Genet.">
        <title>Identification and characterization of upstream open reading frames (uORF) in the 5' untranslated regions (UTR) of genes in Saccharomyces cerevisiae.</title>
        <authorList>
            <person name="Zhang Z."/>
            <person name="Dietrich F.S."/>
        </authorList>
    </citation>
    <scope>NUCLEOTIDE SEQUENCE [MRNA] OF 1-77</scope>
    <source>
        <strain>ATCC 208353 / W303-1A</strain>
    </source>
</reference>
<reference key="6">
    <citation type="journal article" date="1998" name="J. Cell Sci.">
        <title>The Spa2-related protein, Sph1p, is important for polarized growth in yeast.</title>
        <authorList>
            <person name="Roemer T."/>
            <person name="Vallier L."/>
            <person name="Sheu Y.-J."/>
            <person name="Snyder M."/>
        </authorList>
    </citation>
    <scope>FUNCTION</scope>
    <scope>SUBCELLULAR LOCATION</scope>
    <scope>IDENTIFICATION OF FRAMESHIFT</scope>
    <source>
        <strain>S288c / Y604</strain>
    </source>
</reference>
<reference key="7">
    <citation type="journal article" date="2002" name="Science">
        <title>Role of a ubiquitin-like modification in polarized morphogenesis.</title>
        <authorList>
            <person name="Dittmar G.A.G."/>
            <person name="Wilkinson C.R.M."/>
            <person name="Jedrzejewski P.T."/>
            <person name="Finley D."/>
        </authorList>
    </citation>
    <scope>FUNCTION</scope>
    <scope>IDENTIFICATION BY MASS SPECTROMETRY</scope>
    <scope>CONJUGATION TO HUB1</scope>
</reference>
<reference key="8">
    <citation type="journal article" date="2003" name="Nature">
        <title>Global analysis of protein localization in budding yeast.</title>
        <authorList>
            <person name="Huh W.-K."/>
            <person name="Falvo J.V."/>
            <person name="Gerke L.C."/>
            <person name="Carroll A.S."/>
            <person name="Howson R.W."/>
            <person name="Weissman J.S."/>
            <person name="O'Shea E.K."/>
        </authorList>
    </citation>
    <scope>SUBCELLULAR LOCATION [LARGE SCALE ANALYSIS]</scope>
</reference>
<reference key="9">
    <citation type="journal article" date="2003" name="Nature">
        <title>Global analysis of protein expression in yeast.</title>
        <authorList>
            <person name="Ghaemmaghami S."/>
            <person name="Huh W.-K."/>
            <person name="Bower K."/>
            <person name="Howson R.W."/>
            <person name="Belle A."/>
            <person name="Dephoure N."/>
            <person name="O'Shea E.K."/>
            <person name="Weissman J.S."/>
        </authorList>
    </citation>
    <scope>LEVEL OF PROTEIN EXPRESSION [LARGE SCALE ANALYSIS]</scope>
</reference>
<reference key="10">
    <citation type="journal article" date="2004" name="Yeast">
        <title>Localization of proteins that are coordinately expressed with Cln2 during the cell cycle.</title>
        <authorList>
            <person name="Sundin B.A."/>
            <person name="Chiu C.-H."/>
            <person name="Riffle M."/>
            <person name="Davis T.N."/>
            <person name="Muller E.G.D."/>
        </authorList>
    </citation>
    <scope>SUBCELLULAR LOCATION</scope>
</reference>